<dbReference type="EC" id="5.2.1.8"/>
<dbReference type="EMBL" id="AL163572">
    <property type="protein sequence ID" value="CAB87148.1"/>
    <property type="molecule type" value="Genomic_DNA"/>
</dbReference>
<dbReference type="EMBL" id="CP002688">
    <property type="protein sequence ID" value="AED91891.1"/>
    <property type="molecule type" value="Genomic_DNA"/>
</dbReference>
<dbReference type="EMBL" id="BT012636">
    <property type="protein sequence ID" value="AAT06455.1"/>
    <property type="molecule type" value="mRNA"/>
</dbReference>
<dbReference type="EMBL" id="AK316854">
    <property type="protein sequence ID" value="BAH19563.1"/>
    <property type="molecule type" value="mRNA"/>
</dbReference>
<dbReference type="EMBL" id="AK175218">
    <property type="protein sequence ID" value="BAD42981.1"/>
    <property type="molecule type" value="mRNA"/>
</dbReference>
<dbReference type="PIR" id="T48588">
    <property type="entry name" value="T48588"/>
</dbReference>
<dbReference type="RefSeq" id="NP_196845.1">
    <property type="nucleotide sequence ID" value="NM_121344.6"/>
</dbReference>
<dbReference type="SMR" id="Q9LYR5"/>
<dbReference type="FunCoup" id="Q9LYR5">
    <property type="interactions" value="1524"/>
</dbReference>
<dbReference type="STRING" id="3702.Q9LYR5"/>
<dbReference type="iPTMnet" id="Q9LYR5"/>
<dbReference type="PaxDb" id="3702-AT5G13410.1"/>
<dbReference type="ProteomicsDB" id="228909"/>
<dbReference type="EnsemblPlants" id="AT5G13410.1">
    <property type="protein sequence ID" value="AT5G13410.1"/>
    <property type="gene ID" value="AT5G13410"/>
</dbReference>
<dbReference type="GeneID" id="831182"/>
<dbReference type="Gramene" id="AT5G13410.1">
    <property type="protein sequence ID" value="AT5G13410.1"/>
    <property type="gene ID" value="AT5G13410"/>
</dbReference>
<dbReference type="KEGG" id="ath:AT5G13410"/>
<dbReference type="Araport" id="AT5G13410"/>
<dbReference type="TAIR" id="AT5G13410"/>
<dbReference type="eggNOG" id="KOG0552">
    <property type="taxonomic scope" value="Eukaryota"/>
</dbReference>
<dbReference type="HOGENOM" id="CLU_090815_0_0_1"/>
<dbReference type="InParanoid" id="Q9LYR5"/>
<dbReference type="OMA" id="GSHEVIP"/>
<dbReference type="OrthoDB" id="77911at2759"/>
<dbReference type="PhylomeDB" id="Q9LYR5"/>
<dbReference type="PRO" id="PR:Q9LYR5"/>
<dbReference type="Proteomes" id="UP000006548">
    <property type="component" value="Chromosome 5"/>
</dbReference>
<dbReference type="ExpressionAtlas" id="Q9LYR5">
    <property type="expression patterns" value="baseline and differential"/>
</dbReference>
<dbReference type="GO" id="GO:0009507">
    <property type="term" value="C:chloroplast"/>
    <property type="evidence" value="ECO:0007005"/>
    <property type="project" value="TAIR"/>
</dbReference>
<dbReference type="GO" id="GO:0009543">
    <property type="term" value="C:chloroplast thylakoid lumen"/>
    <property type="evidence" value="ECO:0007669"/>
    <property type="project" value="UniProtKB-SubCell"/>
</dbReference>
<dbReference type="GO" id="GO:0009535">
    <property type="term" value="C:chloroplast thylakoid membrane"/>
    <property type="evidence" value="ECO:0007005"/>
    <property type="project" value="TAIR"/>
</dbReference>
<dbReference type="GO" id="GO:0009579">
    <property type="term" value="C:thylakoid"/>
    <property type="evidence" value="ECO:0007005"/>
    <property type="project" value="TAIR"/>
</dbReference>
<dbReference type="GO" id="GO:0031977">
    <property type="term" value="C:thylakoid lumen"/>
    <property type="evidence" value="ECO:0007005"/>
    <property type="project" value="TAIR"/>
</dbReference>
<dbReference type="GO" id="GO:0003755">
    <property type="term" value="F:peptidyl-prolyl cis-trans isomerase activity"/>
    <property type="evidence" value="ECO:0007669"/>
    <property type="project" value="UniProtKB-KW"/>
</dbReference>
<dbReference type="FunFam" id="3.10.50.40:FF:000034">
    <property type="entry name" value="Peptidylprolyl isomerase"/>
    <property type="match status" value="1"/>
</dbReference>
<dbReference type="Gene3D" id="3.10.50.40">
    <property type="match status" value="1"/>
</dbReference>
<dbReference type="InterPro" id="IPR044208">
    <property type="entry name" value="FKBP19-like"/>
</dbReference>
<dbReference type="InterPro" id="IPR046357">
    <property type="entry name" value="PPIase_dom_sf"/>
</dbReference>
<dbReference type="InterPro" id="IPR001179">
    <property type="entry name" value="PPIase_FKBP_dom"/>
</dbReference>
<dbReference type="PANTHER" id="PTHR47717">
    <property type="entry name" value="PEPTIDYL-PROLYL CIS-TRANS ISOMERASE FKBP19, CHLOROPLASTIC"/>
    <property type="match status" value="1"/>
</dbReference>
<dbReference type="PANTHER" id="PTHR47717:SF1">
    <property type="entry name" value="PEPTIDYL-PROLYL CIS-TRANS ISOMERASE FKBP19, CHLOROPLASTIC"/>
    <property type="match status" value="1"/>
</dbReference>
<dbReference type="Pfam" id="PF00254">
    <property type="entry name" value="FKBP_C"/>
    <property type="match status" value="1"/>
</dbReference>
<dbReference type="SUPFAM" id="SSF54534">
    <property type="entry name" value="FKBP-like"/>
    <property type="match status" value="1"/>
</dbReference>
<dbReference type="PROSITE" id="PS50059">
    <property type="entry name" value="FKBP_PPIASE"/>
    <property type="match status" value="1"/>
</dbReference>
<sequence>MASISSFGCFPQSTALAGTSSTTRCRTTVAARLADQSDDFAPLRSSGGNCGCVNNSGEFDRRKLLVSSVGLLIGALSYDSKDGDFASASQFADMPALKGKDYGKTKMKYPDYTETQSGLQYKDLRVGTGPIAKKGDKVVVDWDGYTIGYYGRIFEARNKTKGGSFEGDDKEFFKFTLGSNEVIPAFEEAVSGMALGGIRRIIVPPELGYPDNDYNKSGPRPMTFSGQRALDFVLRNQGLIDKTLLFDVELLKIVPN</sequence>
<evidence type="ECO:0000250" key="1"/>
<evidence type="ECO:0000255" key="2"/>
<evidence type="ECO:0000255" key="3">
    <source>
        <dbReference type="PROSITE-ProRule" id="PRU00277"/>
    </source>
</evidence>
<evidence type="ECO:0000269" key="4">
    <source>
    </source>
</evidence>
<evidence type="ECO:0000269" key="5">
    <source>
    </source>
</evidence>
<evidence type="ECO:0000269" key="6">
    <source>
    </source>
</evidence>
<evidence type="ECO:0000305" key="7"/>
<evidence type="ECO:0007744" key="8">
    <source>
    </source>
</evidence>
<reference key="1">
    <citation type="journal article" date="2000" name="Nature">
        <title>Sequence and analysis of chromosome 5 of the plant Arabidopsis thaliana.</title>
        <authorList>
            <person name="Tabata S."/>
            <person name="Kaneko T."/>
            <person name="Nakamura Y."/>
            <person name="Kotani H."/>
            <person name="Kato T."/>
            <person name="Asamizu E."/>
            <person name="Miyajima N."/>
            <person name="Sasamoto S."/>
            <person name="Kimura T."/>
            <person name="Hosouchi T."/>
            <person name="Kawashima K."/>
            <person name="Kohara M."/>
            <person name="Matsumoto M."/>
            <person name="Matsuno A."/>
            <person name="Muraki A."/>
            <person name="Nakayama S."/>
            <person name="Nakazaki N."/>
            <person name="Naruo K."/>
            <person name="Okumura S."/>
            <person name="Shinpo S."/>
            <person name="Takeuchi C."/>
            <person name="Wada T."/>
            <person name="Watanabe A."/>
            <person name="Yamada M."/>
            <person name="Yasuda M."/>
            <person name="Sato S."/>
            <person name="de la Bastide M."/>
            <person name="Huang E."/>
            <person name="Spiegel L."/>
            <person name="Gnoj L."/>
            <person name="O'Shaughnessy A."/>
            <person name="Preston R."/>
            <person name="Habermann K."/>
            <person name="Murray J."/>
            <person name="Johnson D."/>
            <person name="Rohlfing T."/>
            <person name="Nelson J."/>
            <person name="Stoneking T."/>
            <person name="Pepin K."/>
            <person name="Spieth J."/>
            <person name="Sekhon M."/>
            <person name="Armstrong J."/>
            <person name="Becker M."/>
            <person name="Belter E."/>
            <person name="Cordum H."/>
            <person name="Cordes M."/>
            <person name="Courtney L."/>
            <person name="Courtney W."/>
            <person name="Dante M."/>
            <person name="Du H."/>
            <person name="Edwards J."/>
            <person name="Fryman J."/>
            <person name="Haakensen B."/>
            <person name="Lamar E."/>
            <person name="Latreille P."/>
            <person name="Leonard S."/>
            <person name="Meyer R."/>
            <person name="Mulvaney E."/>
            <person name="Ozersky P."/>
            <person name="Riley A."/>
            <person name="Strowmatt C."/>
            <person name="Wagner-McPherson C."/>
            <person name="Wollam A."/>
            <person name="Yoakum M."/>
            <person name="Bell M."/>
            <person name="Dedhia N."/>
            <person name="Parnell L."/>
            <person name="Shah R."/>
            <person name="Rodriguez M."/>
            <person name="Hoon See L."/>
            <person name="Vil D."/>
            <person name="Baker J."/>
            <person name="Kirchoff K."/>
            <person name="Toth K."/>
            <person name="King L."/>
            <person name="Bahret A."/>
            <person name="Miller B."/>
            <person name="Marra M.A."/>
            <person name="Martienssen R."/>
            <person name="McCombie W.R."/>
            <person name="Wilson R.K."/>
            <person name="Murphy G."/>
            <person name="Bancroft I."/>
            <person name="Volckaert G."/>
            <person name="Wambutt R."/>
            <person name="Duesterhoeft A."/>
            <person name="Stiekema W."/>
            <person name="Pohl T."/>
            <person name="Entian K.-D."/>
            <person name="Terryn N."/>
            <person name="Hartley N."/>
            <person name="Bent E."/>
            <person name="Johnson S."/>
            <person name="Langham S.-A."/>
            <person name="McCullagh B."/>
            <person name="Robben J."/>
            <person name="Grymonprez B."/>
            <person name="Zimmermann W."/>
            <person name="Ramsperger U."/>
            <person name="Wedler H."/>
            <person name="Balke K."/>
            <person name="Wedler E."/>
            <person name="Peters S."/>
            <person name="van Staveren M."/>
            <person name="Dirkse W."/>
            <person name="Mooijman P."/>
            <person name="Klein Lankhorst R."/>
            <person name="Weitzenegger T."/>
            <person name="Bothe G."/>
            <person name="Rose M."/>
            <person name="Hauf J."/>
            <person name="Berneiser S."/>
            <person name="Hempel S."/>
            <person name="Feldpausch M."/>
            <person name="Lamberth S."/>
            <person name="Villarroel R."/>
            <person name="Gielen J."/>
            <person name="Ardiles W."/>
            <person name="Bents O."/>
            <person name="Lemcke K."/>
            <person name="Kolesov G."/>
            <person name="Mayer K.F.X."/>
            <person name="Rudd S."/>
            <person name="Schoof H."/>
            <person name="Schueller C."/>
            <person name="Zaccaria P."/>
            <person name="Mewes H.-W."/>
            <person name="Bevan M."/>
            <person name="Fransz P.F."/>
        </authorList>
    </citation>
    <scope>NUCLEOTIDE SEQUENCE [LARGE SCALE GENOMIC DNA]</scope>
    <source>
        <strain>cv. Columbia</strain>
    </source>
</reference>
<reference key="2">
    <citation type="journal article" date="2017" name="Plant J.">
        <title>Araport11: a complete reannotation of the Arabidopsis thaliana reference genome.</title>
        <authorList>
            <person name="Cheng C.Y."/>
            <person name="Krishnakumar V."/>
            <person name="Chan A.P."/>
            <person name="Thibaud-Nissen F."/>
            <person name="Schobel S."/>
            <person name="Town C.D."/>
        </authorList>
    </citation>
    <scope>GENOME REANNOTATION</scope>
    <source>
        <strain>cv. Columbia</strain>
    </source>
</reference>
<reference key="3">
    <citation type="submission" date="2004-05" db="EMBL/GenBank/DDBJ databases">
        <title>Arabidopsis ORF clones.</title>
        <authorList>
            <person name="Shinn P."/>
            <person name="Chen H."/>
            <person name="Cheuk R.F."/>
            <person name="Kim C.J."/>
            <person name="Carninci P."/>
            <person name="Hayashizaki Y."/>
            <person name="Ishida J."/>
            <person name="Kamiya A."/>
            <person name="Kawai J."/>
            <person name="Narusaka M."/>
            <person name="Sakurai T."/>
            <person name="Satou M."/>
            <person name="Seki M."/>
            <person name="Shinozaki K."/>
            <person name="Ecker J.R."/>
        </authorList>
    </citation>
    <scope>NUCLEOTIDE SEQUENCE [LARGE SCALE MRNA]</scope>
    <source>
        <strain>cv. Columbia</strain>
    </source>
</reference>
<reference key="4">
    <citation type="journal article" date="2009" name="DNA Res.">
        <title>Analysis of multiple occurrences of alternative splicing events in Arabidopsis thaliana using novel sequenced full-length cDNAs.</title>
        <authorList>
            <person name="Iida K."/>
            <person name="Fukami-Kobayashi K."/>
            <person name="Toyoda A."/>
            <person name="Sakaki Y."/>
            <person name="Kobayashi M."/>
            <person name="Seki M."/>
            <person name="Shinozaki K."/>
        </authorList>
    </citation>
    <scope>NUCLEOTIDE SEQUENCE [LARGE SCALE MRNA]</scope>
    <source>
        <strain>cv. Columbia</strain>
        <tissue>Rosette leaf</tissue>
    </source>
</reference>
<reference key="5">
    <citation type="submission" date="2004-09" db="EMBL/GenBank/DDBJ databases">
        <title>Large-scale analysis of RIKEN Arabidopsis full-length (RAFL) cDNAs.</title>
        <authorList>
            <person name="Totoki Y."/>
            <person name="Seki M."/>
            <person name="Ishida J."/>
            <person name="Nakajima M."/>
            <person name="Enju A."/>
            <person name="Kamiya A."/>
            <person name="Narusaka M."/>
            <person name="Shin-i T."/>
            <person name="Nakagawa M."/>
            <person name="Sakamoto N."/>
            <person name="Oishi K."/>
            <person name="Kohara Y."/>
            <person name="Kobayashi M."/>
            <person name="Toyoda A."/>
            <person name="Sakaki Y."/>
            <person name="Sakurai T."/>
            <person name="Iida K."/>
            <person name="Akiyama K."/>
            <person name="Satou M."/>
            <person name="Toyoda T."/>
            <person name="Konagaya A."/>
            <person name="Carninci P."/>
            <person name="Kawai J."/>
            <person name="Hayashizaki Y."/>
            <person name="Shinozaki K."/>
        </authorList>
    </citation>
    <scope>NUCLEOTIDE SEQUENCE [LARGE SCALE MRNA] OF 6-256</scope>
    <source>
        <strain>cv. Columbia</strain>
    </source>
</reference>
<reference key="6">
    <citation type="journal article" date="2002" name="J. Biol. Chem.">
        <title>Proteome map of the chloroplast lumen of Arabidopsis thaliana.</title>
        <authorList>
            <person name="Schubert M."/>
            <person name="Petersson U.A."/>
            <person name="Haas B.J."/>
            <person name="Funk C."/>
            <person name="Schroeder W.P."/>
            <person name="Kieselbach T."/>
        </authorList>
    </citation>
    <scope>PROTEIN SEQUENCE OF 89-112</scope>
    <scope>SUBCELLULAR LOCATION</scope>
</reference>
<reference key="7">
    <citation type="journal article" date="2002" name="Plant Cell">
        <title>Central functions of the lumenal and peripheral thylakoid proteome of Arabidopsis determined by experimentation and genome-wide prediction.</title>
        <authorList>
            <person name="Peltier J.-B."/>
            <person name="Emanuelsson O."/>
            <person name="Kalume D.E."/>
            <person name="Ytterberg J."/>
            <person name="Friso G."/>
            <person name="Rudella A."/>
            <person name="Liberles D.A."/>
            <person name="Soederberg L."/>
            <person name="Roepstorff P."/>
            <person name="von Heijne G."/>
            <person name="van Wijk K.J."/>
        </authorList>
    </citation>
    <scope>PROTEIN SEQUENCE OF N-TERMINUS</scope>
    <scope>IDENTIFICATION BY MASS SPECTROMETRY</scope>
</reference>
<reference key="8">
    <citation type="journal article" date="2004" name="Plant Physiol.">
        <title>Immunophilins and parvulins. Superfamily of peptidyl prolyl isomerases in Arabidopsis.</title>
        <authorList>
            <person name="He Z."/>
            <person name="Li L."/>
            <person name="Luan S."/>
        </authorList>
    </citation>
    <scope>GENE FAMILY</scope>
    <scope>NOMENCLATURE</scope>
    <source>
        <strain>cv. Columbia</strain>
    </source>
</reference>
<reference key="9">
    <citation type="journal article" date="2008" name="PLoS ONE">
        <title>Sorting signals, N-terminal modifications and abundance of the chloroplast proteome.</title>
        <authorList>
            <person name="Zybailov B."/>
            <person name="Rutschow H."/>
            <person name="Friso G."/>
            <person name="Rudella A."/>
            <person name="Emanuelsson O."/>
            <person name="Sun Q."/>
            <person name="van Wijk K.J."/>
        </authorList>
    </citation>
    <scope>IDENTIFICATION BY MASS SPECTROMETRY</scope>
    <scope>SUBCELLULAR LOCATION [LARGE SCALE ANALYSIS]</scope>
</reference>
<reference key="10">
    <citation type="journal article" date="2012" name="J. Proteome Res.">
        <title>Identification of phosphoproteins in Arabidopsis thaliana leaves using polyethylene glycol fractionation, immobilized metal-ion affinity chromatography, two-dimensional gel electrophoresis and mass spectrometry.</title>
        <authorList>
            <person name="Aryal U.K."/>
            <person name="Krochko J.E."/>
            <person name="Ross A.R."/>
        </authorList>
    </citation>
    <scope>PHOSPHORYLATION [LARGE SCALE ANALYSIS] AT SER-164</scope>
    <scope>IDENTIFICATION BY MASS SPECTROMETRY [LARGE SCALE ANALYSIS]</scope>
</reference>
<gene>
    <name type="primary">FKBP19</name>
    <name type="synonym">FKBP27</name>
    <name type="ordered locus">At5g13410</name>
    <name type="ORF">T22N19.60</name>
</gene>
<feature type="transit peptide" description="Chloroplast" evidence="2">
    <location>
        <begin position="1"/>
        <end position="29"/>
    </location>
</feature>
<feature type="transit peptide" description="Thylakoid" evidence="4 5">
    <location>
        <begin position="30"/>
        <end position="88"/>
    </location>
</feature>
<feature type="chain" id="PRO_0000342098" description="Peptidyl-prolyl cis-trans isomerase FKBP19, chloroplastic">
    <location>
        <begin position="89"/>
        <end position="256"/>
    </location>
</feature>
<feature type="domain" description="PPIase FKBP-type" evidence="3">
    <location>
        <begin position="135"/>
        <end position="254"/>
    </location>
</feature>
<feature type="modified residue" description="Phosphoserine" evidence="8">
    <location>
        <position position="164"/>
    </location>
</feature>
<feature type="sequence conflict" description="In Ref. 5; BAD42981." evidence="7" ref="5">
    <original>S</original>
    <variation>SVLKT</variation>
    <location>
        <position position="46"/>
    </location>
</feature>
<name>FKB19_ARATH</name>
<organism>
    <name type="scientific">Arabidopsis thaliana</name>
    <name type="common">Mouse-ear cress</name>
    <dbReference type="NCBI Taxonomy" id="3702"/>
    <lineage>
        <taxon>Eukaryota</taxon>
        <taxon>Viridiplantae</taxon>
        <taxon>Streptophyta</taxon>
        <taxon>Embryophyta</taxon>
        <taxon>Tracheophyta</taxon>
        <taxon>Spermatophyta</taxon>
        <taxon>Magnoliopsida</taxon>
        <taxon>eudicotyledons</taxon>
        <taxon>Gunneridae</taxon>
        <taxon>Pentapetalae</taxon>
        <taxon>rosids</taxon>
        <taxon>malvids</taxon>
        <taxon>Brassicales</taxon>
        <taxon>Brassicaceae</taxon>
        <taxon>Camelineae</taxon>
        <taxon>Arabidopsis</taxon>
    </lineage>
</organism>
<protein>
    <recommendedName>
        <fullName>Peptidyl-prolyl cis-trans isomerase FKBP19, chloroplastic</fullName>
        <shortName>PPIase FKBP19</shortName>
        <ecNumber>5.2.1.8</ecNumber>
    </recommendedName>
    <alternativeName>
        <fullName>FK506-binding protein 19</fullName>
        <shortName>AtFKBP19</shortName>
    </alternativeName>
    <alternativeName>
        <fullName>Immunophilin FKBP19</fullName>
    </alternativeName>
    <alternativeName>
        <fullName>Rotamase</fullName>
    </alternativeName>
</protein>
<proteinExistence type="evidence at protein level"/>
<keyword id="KW-0150">Chloroplast</keyword>
<keyword id="KW-0903">Direct protein sequencing</keyword>
<keyword id="KW-0413">Isomerase</keyword>
<keyword id="KW-0597">Phosphoprotein</keyword>
<keyword id="KW-0934">Plastid</keyword>
<keyword id="KW-1185">Reference proteome</keyword>
<keyword id="KW-0697">Rotamase</keyword>
<keyword id="KW-0793">Thylakoid</keyword>
<keyword id="KW-0809">Transit peptide</keyword>
<comment type="function">
    <text evidence="1">PPIases accelerate the folding of proteins. It catalyzes the cis-trans isomerization of proline imidic peptide bonds in oligopeptides (By similarity).</text>
</comment>
<comment type="catalytic activity">
    <reaction>
        <text>[protein]-peptidylproline (omega=180) = [protein]-peptidylproline (omega=0)</text>
        <dbReference type="Rhea" id="RHEA:16237"/>
        <dbReference type="Rhea" id="RHEA-COMP:10747"/>
        <dbReference type="Rhea" id="RHEA-COMP:10748"/>
        <dbReference type="ChEBI" id="CHEBI:83833"/>
        <dbReference type="ChEBI" id="CHEBI:83834"/>
        <dbReference type="EC" id="5.2.1.8"/>
    </reaction>
</comment>
<comment type="subcellular location">
    <subcellularLocation>
        <location evidence="4 6">Plastid</location>
        <location evidence="4 6">Chloroplast thylakoid lumen</location>
    </subcellularLocation>
</comment>
<comment type="similarity">
    <text evidence="7">Belongs to the FKBP-type PPIase family.</text>
</comment>
<accession>Q9LYR5</accession>
<accession>B9DFP6</accession>
<accession>Q682Z9</accession>